<accession>Q3KKU6</accession>
<organism>
    <name type="scientific">Chlamydia trachomatis serovar A (strain ATCC VR-571B / DSM 19440 / HAR-13)</name>
    <dbReference type="NCBI Taxonomy" id="315277"/>
    <lineage>
        <taxon>Bacteria</taxon>
        <taxon>Pseudomonadati</taxon>
        <taxon>Chlamydiota</taxon>
        <taxon>Chlamydiia</taxon>
        <taxon>Chlamydiales</taxon>
        <taxon>Chlamydiaceae</taxon>
        <taxon>Chlamydia/Chlamydophila group</taxon>
        <taxon>Chlamydia</taxon>
    </lineage>
</organism>
<feature type="chain" id="PRO_1000023897" description="Uroporphyrinogen decarboxylase">
    <location>
        <begin position="1"/>
        <end position="336"/>
    </location>
</feature>
<feature type="binding site" evidence="1">
    <location>
        <begin position="24"/>
        <end position="28"/>
    </location>
    <ligand>
        <name>substrate</name>
    </ligand>
</feature>
<feature type="binding site" evidence="1">
    <location>
        <position position="73"/>
    </location>
    <ligand>
        <name>substrate</name>
    </ligand>
</feature>
<feature type="binding site" evidence="1">
    <location>
        <position position="142"/>
    </location>
    <ligand>
        <name>substrate</name>
    </ligand>
</feature>
<feature type="binding site" evidence="1">
    <location>
        <position position="197"/>
    </location>
    <ligand>
        <name>substrate</name>
    </ligand>
</feature>
<feature type="binding site" evidence="1">
    <location>
        <position position="312"/>
    </location>
    <ligand>
        <name>substrate</name>
    </ligand>
</feature>
<feature type="site" description="Transition state stabilizer" evidence="1">
    <location>
        <position position="73"/>
    </location>
</feature>
<dbReference type="EC" id="4.1.1.37" evidence="1"/>
<dbReference type="EMBL" id="CP000051">
    <property type="protein sequence ID" value="AAX51026.1"/>
    <property type="molecule type" value="Genomic_DNA"/>
</dbReference>
<dbReference type="RefSeq" id="WP_009872125.1">
    <property type="nucleotide sequence ID" value="NC_007429.1"/>
</dbReference>
<dbReference type="SMR" id="Q3KKU6"/>
<dbReference type="KEGG" id="cta:CTA_0813"/>
<dbReference type="HOGENOM" id="CLU_040933_0_0_0"/>
<dbReference type="UniPathway" id="UPA00251">
    <property type="reaction ID" value="UER00321"/>
</dbReference>
<dbReference type="Proteomes" id="UP000002532">
    <property type="component" value="Chromosome"/>
</dbReference>
<dbReference type="GO" id="GO:0005829">
    <property type="term" value="C:cytosol"/>
    <property type="evidence" value="ECO:0007669"/>
    <property type="project" value="TreeGrafter"/>
</dbReference>
<dbReference type="GO" id="GO:0004853">
    <property type="term" value="F:uroporphyrinogen decarboxylase activity"/>
    <property type="evidence" value="ECO:0007669"/>
    <property type="project" value="UniProtKB-UniRule"/>
</dbReference>
<dbReference type="GO" id="GO:0006782">
    <property type="term" value="P:protoporphyrinogen IX biosynthetic process"/>
    <property type="evidence" value="ECO:0007669"/>
    <property type="project" value="UniProtKB-UniRule"/>
</dbReference>
<dbReference type="CDD" id="cd00717">
    <property type="entry name" value="URO-D"/>
    <property type="match status" value="1"/>
</dbReference>
<dbReference type="Gene3D" id="3.20.20.210">
    <property type="match status" value="1"/>
</dbReference>
<dbReference type="HAMAP" id="MF_00218">
    <property type="entry name" value="URO_D"/>
    <property type="match status" value="1"/>
</dbReference>
<dbReference type="InterPro" id="IPR038071">
    <property type="entry name" value="UROD/MetE-like_sf"/>
</dbReference>
<dbReference type="InterPro" id="IPR006361">
    <property type="entry name" value="Uroporphyrinogen_deCO2ase_HemE"/>
</dbReference>
<dbReference type="InterPro" id="IPR000257">
    <property type="entry name" value="Uroporphyrinogen_deCOase"/>
</dbReference>
<dbReference type="NCBIfam" id="TIGR01464">
    <property type="entry name" value="hemE"/>
    <property type="match status" value="1"/>
</dbReference>
<dbReference type="PANTHER" id="PTHR21091">
    <property type="entry name" value="METHYLTETRAHYDROFOLATE:HOMOCYSTEINE METHYLTRANSFERASE RELATED"/>
    <property type="match status" value="1"/>
</dbReference>
<dbReference type="PANTHER" id="PTHR21091:SF169">
    <property type="entry name" value="UROPORPHYRINOGEN DECARBOXYLASE"/>
    <property type="match status" value="1"/>
</dbReference>
<dbReference type="Pfam" id="PF01208">
    <property type="entry name" value="URO-D"/>
    <property type="match status" value="1"/>
</dbReference>
<dbReference type="SUPFAM" id="SSF51726">
    <property type="entry name" value="UROD/MetE-like"/>
    <property type="match status" value="1"/>
</dbReference>
<dbReference type="PROSITE" id="PS00906">
    <property type="entry name" value="UROD_1"/>
    <property type="match status" value="1"/>
</dbReference>
<dbReference type="PROSITE" id="PS00907">
    <property type="entry name" value="UROD_2"/>
    <property type="match status" value="1"/>
</dbReference>
<evidence type="ECO:0000255" key="1">
    <source>
        <dbReference type="HAMAP-Rule" id="MF_00218"/>
    </source>
</evidence>
<sequence>MPMTGFYETISPRDQQRPPIWFLRQVGRYIPQYQELKRNRSLKDFFLDTESIVEATLLGPSLLGVDAAIVFADILSILEGFSVDYRFAPGPEVSYSPHEPLIFTKDPQETFSFLLEAIQQLTKRLTVPLIAFAASPFTLASYLIEGGASRDYPKTIAFLYQYPDRFKALLDEITLGTATYLQMQVQAGAAAIQLFESSSLRLPPHLFAKYVVAPNTKLIRQIKQTGNPPISLFCRCFYQEFLSLYAIGADTLHPDYHVELPEVYRQIHSPGSIQGNFDPALLLLPQDALIAHLEAYLAPLKQQSHYIFNLGHGILPQTPIENVQAVVSCLTSISTS</sequence>
<comment type="function">
    <text evidence="1">Catalyzes the decarboxylation of four acetate groups of uroporphyrinogen-III to yield coproporphyrinogen-III.</text>
</comment>
<comment type="catalytic activity">
    <reaction evidence="1">
        <text>uroporphyrinogen III + 4 H(+) = coproporphyrinogen III + 4 CO2</text>
        <dbReference type="Rhea" id="RHEA:19865"/>
        <dbReference type="ChEBI" id="CHEBI:15378"/>
        <dbReference type="ChEBI" id="CHEBI:16526"/>
        <dbReference type="ChEBI" id="CHEBI:57308"/>
        <dbReference type="ChEBI" id="CHEBI:57309"/>
        <dbReference type="EC" id="4.1.1.37"/>
    </reaction>
</comment>
<comment type="pathway">
    <text evidence="1">Porphyrin-containing compound metabolism; protoporphyrin-IX biosynthesis; coproporphyrinogen-III from 5-aminolevulinate: step 4/4.</text>
</comment>
<comment type="subunit">
    <text evidence="1">Homodimer.</text>
</comment>
<comment type="subcellular location">
    <subcellularLocation>
        <location evidence="1">Cytoplasm</location>
    </subcellularLocation>
</comment>
<comment type="similarity">
    <text evidence="1">Belongs to the uroporphyrinogen decarboxylase family.</text>
</comment>
<gene>
    <name evidence="1" type="primary">hemE</name>
    <name type="ordered locus">CTA_0813</name>
</gene>
<name>DCUP_CHLTA</name>
<protein>
    <recommendedName>
        <fullName evidence="1">Uroporphyrinogen decarboxylase</fullName>
        <shortName evidence="1">UPD</shortName>
        <shortName evidence="1">URO-D</shortName>
        <ecNumber evidence="1">4.1.1.37</ecNumber>
    </recommendedName>
</protein>
<proteinExistence type="inferred from homology"/>
<keyword id="KW-0963">Cytoplasm</keyword>
<keyword id="KW-0210">Decarboxylase</keyword>
<keyword id="KW-0456">Lyase</keyword>
<keyword id="KW-0627">Porphyrin biosynthesis</keyword>
<reference key="1">
    <citation type="journal article" date="2005" name="Infect. Immun.">
        <title>Comparative genomic analysis of Chlamydia trachomatis oculotropic and genitotropic strains.</title>
        <authorList>
            <person name="Carlson J.H."/>
            <person name="Porcella S.F."/>
            <person name="McClarty G."/>
            <person name="Caldwell H.D."/>
        </authorList>
    </citation>
    <scope>NUCLEOTIDE SEQUENCE [LARGE SCALE GENOMIC DNA]</scope>
    <source>
        <strain>ATCC VR-571B / DSM 19440 / HAR-13</strain>
    </source>
</reference>